<gene>
    <name evidence="1" type="primary">ligA</name>
    <name type="ordered locus">Ava_0313</name>
</gene>
<feature type="chain" id="PRO_0000313110" description="DNA ligase">
    <location>
        <begin position="1"/>
        <end position="676"/>
    </location>
</feature>
<feature type="domain" description="BRCT" evidence="1">
    <location>
        <begin position="599"/>
        <end position="676"/>
    </location>
</feature>
<feature type="active site" description="N6-AMP-lysine intermediate" evidence="1">
    <location>
        <position position="117"/>
    </location>
</feature>
<feature type="binding site" evidence="1">
    <location>
        <begin position="35"/>
        <end position="39"/>
    </location>
    <ligand>
        <name>NAD(+)</name>
        <dbReference type="ChEBI" id="CHEBI:57540"/>
    </ligand>
</feature>
<feature type="binding site" evidence="1">
    <location>
        <begin position="84"/>
        <end position="85"/>
    </location>
    <ligand>
        <name>NAD(+)</name>
        <dbReference type="ChEBI" id="CHEBI:57540"/>
    </ligand>
</feature>
<feature type="binding site" evidence="1">
    <location>
        <position position="115"/>
    </location>
    <ligand>
        <name>NAD(+)</name>
        <dbReference type="ChEBI" id="CHEBI:57540"/>
    </ligand>
</feature>
<feature type="binding site" evidence="1">
    <location>
        <position position="138"/>
    </location>
    <ligand>
        <name>NAD(+)</name>
        <dbReference type="ChEBI" id="CHEBI:57540"/>
    </ligand>
</feature>
<feature type="binding site" evidence="1">
    <location>
        <position position="177"/>
    </location>
    <ligand>
        <name>NAD(+)</name>
        <dbReference type="ChEBI" id="CHEBI:57540"/>
    </ligand>
</feature>
<feature type="binding site" evidence="1">
    <location>
        <position position="296"/>
    </location>
    <ligand>
        <name>NAD(+)</name>
        <dbReference type="ChEBI" id="CHEBI:57540"/>
    </ligand>
</feature>
<feature type="binding site" evidence="1">
    <location>
        <position position="320"/>
    </location>
    <ligand>
        <name>NAD(+)</name>
        <dbReference type="ChEBI" id="CHEBI:57540"/>
    </ligand>
</feature>
<feature type="binding site" evidence="1">
    <location>
        <position position="414"/>
    </location>
    <ligand>
        <name>Zn(2+)</name>
        <dbReference type="ChEBI" id="CHEBI:29105"/>
    </ligand>
</feature>
<feature type="binding site" evidence="1">
    <location>
        <position position="417"/>
    </location>
    <ligand>
        <name>Zn(2+)</name>
        <dbReference type="ChEBI" id="CHEBI:29105"/>
    </ligand>
</feature>
<feature type="binding site" evidence="1">
    <location>
        <position position="432"/>
    </location>
    <ligand>
        <name>Zn(2+)</name>
        <dbReference type="ChEBI" id="CHEBI:29105"/>
    </ligand>
</feature>
<feature type="binding site" evidence="1">
    <location>
        <position position="437"/>
    </location>
    <ligand>
        <name>Zn(2+)</name>
        <dbReference type="ChEBI" id="CHEBI:29105"/>
    </ligand>
</feature>
<proteinExistence type="inferred from homology"/>
<comment type="function">
    <text evidence="1">DNA ligase that catalyzes the formation of phosphodiester linkages between 5'-phosphoryl and 3'-hydroxyl groups in double-stranded DNA using NAD as a coenzyme and as the energy source for the reaction. It is essential for DNA replication and repair of damaged DNA.</text>
</comment>
<comment type="catalytic activity">
    <reaction evidence="1">
        <text>NAD(+) + (deoxyribonucleotide)n-3'-hydroxyl + 5'-phospho-(deoxyribonucleotide)m = (deoxyribonucleotide)n+m + AMP + beta-nicotinamide D-nucleotide.</text>
        <dbReference type="EC" id="6.5.1.2"/>
    </reaction>
</comment>
<comment type="cofactor">
    <cofactor evidence="1">
        <name>Mg(2+)</name>
        <dbReference type="ChEBI" id="CHEBI:18420"/>
    </cofactor>
    <cofactor evidence="1">
        <name>Mn(2+)</name>
        <dbReference type="ChEBI" id="CHEBI:29035"/>
    </cofactor>
</comment>
<comment type="similarity">
    <text evidence="1">Belongs to the NAD-dependent DNA ligase family. LigA subfamily.</text>
</comment>
<dbReference type="EC" id="6.5.1.2" evidence="1"/>
<dbReference type="EMBL" id="CP000117">
    <property type="protein sequence ID" value="ABA19939.1"/>
    <property type="molecule type" value="Genomic_DNA"/>
</dbReference>
<dbReference type="SMR" id="Q3MGE7"/>
<dbReference type="STRING" id="240292.Ava_0313"/>
<dbReference type="KEGG" id="ava:Ava_0313"/>
<dbReference type="eggNOG" id="COG0272">
    <property type="taxonomic scope" value="Bacteria"/>
</dbReference>
<dbReference type="HOGENOM" id="CLU_007764_2_1_3"/>
<dbReference type="Proteomes" id="UP000002533">
    <property type="component" value="Chromosome"/>
</dbReference>
<dbReference type="GO" id="GO:0003677">
    <property type="term" value="F:DNA binding"/>
    <property type="evidence" value="ECO:0007669"/>
    <property type="project" value="InterPro"/>
</dbReference>
<dbReference type="GO" id="GO:0003911">
    <property type="term" value="F:DNA ligase (NAD+) activity"/>
    <property type="evidence" value="ECO:0007669"/>
    <property type="project" value="UniProtKB-UniRule"/>
</dbReference>
<dbReference type="GO" id="GO:0046872">
    <property type="term" value="F:metal ion binding"/>
    <property type="evidence" value="ECO:0007669"/>
    <property type="project" value="UniProtKB-KW"/>
</dbReference>
<dbReference type="GO" id="GO:0006281">
    <property type="term" value="P:DNA repair"/>
    <property type="evidence" value="ECO:0007669"/>
    <property type="project" value="UniProtKB-KW"/>
</dbReference>
<dbReference type="GO" id="GO:0006260">
    <property type="term" value="P:DNA replication"/>
    <property type="evidence" value="ECO:0007669"/>
    <property type="project" value="UniProtKB-KW"/>
</dbReference>
<dbReference type="CDD" id="cd00114">
    <property type="entry name" value="LIGANc"/>
    <property type="match status" value="1"/>
</dbReference>
<dbReference type="FunFam" id="1.10.150.20:FF:000007">
    <property type="entry name" value="DNA ligase"/>
    <property type="match status" value="1"/>
</dbReference>
<dbReference type="FunFam" id="1.10.287.610:FF:000002">
    <property type="entry name" value="DNA ligase"/>
    <property type="match status" value="1"/>
</dbReference>
<dbReference type="FunFam" id="2.40.50.140:FF:000012">
    <property type="entry name" value="DNA ligase"/>
    <property type="match status" value="1"/>
</dbReference>
<dbReference type="FunFam" id="3.30.470.30:FF:000001">
    <property type="entry name" value="DNA ligase"/>
    <property type="match status" value="1"/>
</dbReference>
<dbReference type="Gene3D" id="6.20.10.30">
    <property type="match status" value="1"/>
</dbReference>
<dbReference type="Gene3D" id="1.10.150.20">
    <property type="entry name" value="5' to 3' exonuclease, C-terminal subdomain"/>
    <property type="match status" value="2"/>
</dbReference>
<dbReference type="Gene3D" id="3.40.50.10190">
    <property type="entry name" value="BRCT domain"/>
    <property type="match status" value="1"/>
</dbReference>
<dbReference type="Gene3D" id="3.30.470.30">
    <property type="entry name" value="DNA ligase/mRNA capping enzyme"/>
    <property type="match status" value="1"/>
</dbReference>
<dbReference type="Gene3D" id="1.10.287.610">
    <property type="entry name" value="Helix hairpin bin"/>
    <property type="match status" value="1"/>
</dbReference>
<dbReference type="Gene3D" id="2.40.50.140">
    <property type="entry name" value="Nucleic acid-binding proteins"/>
    <property type="match status" value="1"/>
</dbReference>
<dbReference type="HAMAP" id="MF_01588">
    <property type="entry name" value="DNA_ligase_A"/>
    <property type="match status" value="1"/>
</dbReference>
<dbReference type="InterPro" id="IPR001357">
    <property type="entry name" value="BRCT_dom"/>
</dbReference>
<dbReference type="InterPro" id="IPR036420">
    <property type="entry name" value="BRCT_dom_sf"/>
</dbReference>
<dbReference type="InterPro" id="IPR041663">
    <property type="entry name" value="DisA/LigA_HHH"/>
</dbReference>
<dbReference type="InterPro" id="IPR001679">
    <property type="entry name" value="DNA_ligase"/>
</dbReference>
<dbReference type="InterPro" id="IPR018239">
    <property type="entry name" value="DNA_ligase_AS"/>
</dbReference>
<dbReference type="InterPro" id="IPR033136">
    <property type="entry name" value="DNA_ligase_CS"/>
</dbReference>
<dbReference type="InterPro" id="IPR013839">
    <property type="entry name" value="DNAligase_adenylation"/>
</dbReference>
<dbReference type="InterPro" id="IPR013840">
    <property type="entry name" value="DNAligase_N"/>
</dbReference>
<dbReference type="InterPro" id="IPR003583">
    <property type="entry name" value="Hlx-hairpin-Hlx_DNA-bd_motif"/>
</dbReference>
<dbReference type="InterPro" id="IPR012340">
    <property type="entry name" value="NA-bd_OB-fold"/>
</dbReference>
<dbReference type="InterPro" id="IPR004150">
    <property type="entry name" value="NAD_DNA_ligase_OB"/>
</dbReference>
<dbReference type="InterPro" id="IPR010994">
    <property type="entry name" value="RuvA_2-like"/>
</dbReference>
<dbReference type="InterPro" id="IPR004149">
    <property type="entry name" value="Znf_DNAligase_C4"/>
</dbReference>
<dbReference type="NCBIfam" id="TIGR00575">
    <property type="entry name" value="dnlj"/>
    <property type="match status" value="1"/>
</dbReference>
<dbReference type="NCBIfam" id="NF005932">
    <property type="entry name" value="PRK07956.1"/>
    <property type="match status" value="1"/>
</dbReference>
<dbReference type="PANTHER" id="PTHR23389">
    <property type="entry name" value="CHROMOSOME TRANSMISSION FIDELITY FACTOR 18"/>
    <property type="match status" value="1"/>
</dbReference>
<dbReference type="PANTHER" id="PTHR23389:SF6">
    <property type="entry name" value="REPLICATION FACTOR C SUBUNIT 1"/>
    <property type="match status" value="1"/>
</dbReference>
<dbReference type="Pfam" id="PF00533">
    <property type="entry name" value="BRCT"/>
    <property type="match status" value="1"/>
</dbReference>
<dbReference type="Pfam" id="PF01653">
    <property type="entry name" value="DNA_ligase_aden"/>
    <property type="match status" value="1"/>
</dbReference>
<dbReference type="Pfam" id="PF03120">
    <property type="entry name" value="DNA_ligase_OB"/>
    <property type="match status" value="1"/>
</dbReference>
<dbReference type="Pfam" id="PF03119">
    <property type="entry name" value="DNA_ligase_ZBD"/>
    <property type="match status" value="1"/>
</dbReference>
<dbReference type="Pfam" id="PF12826">
    <property type="entry name" value="HHH_2"/>
    <property type="match status" value="1"/>
</dbReference>
<dbReference type="Pfam" id="PF14520">
    <property type="entry name" value="HHH_5"/>
    <property type="match status" value="1"/>
</dbReference>
<dbReference type="Pfam" id="PF22745">
    <property type="entry name" value="Nlig-Ia"/>
    <property type="match status" value="1"/>
</dbReference>
<dbReference type="PIRSF" id="PIRSF001604">
    <property type="entry name" value="LigA"/>
    <property type="match status" value="1"/>
</dbReference>
<dbReference type="SMART" id="SM00292">
    <property type="entry name" value="BRCT"/>
    <property type="match status" value="1"/>
</dbReference>
<dbReference type="SMART" id="SM00278">
    <property type="entry name" value="HhH1"/>
    <property type="match status" value="3"/>
</dbReference>
<dbReference type="SMART" id="SM00532">
    <property type="entry name" value="LIGANc"/>
    <property type="match status" value="1"/>
</dbReference>
<dbReference type="SUPFAM" id="SSF52113">
    <property type="entry name" value="BRCT domain"/>
    <property type="match status" value="1"/>
</dbReference>
<dbReference type="SUPFAM" id="SSF56091">
    <property type="entry name" value="DNA ligase/mRNA capping enzyme, catalytic domain"/>
    <property type="match status" value="1"/>
</dbReference>
<dbReference type="SUPFAM" id="SSF50249">
    <property type="entry name" value="Nucleic acid-binding proteins"/>
    <property type="match status" value="1"/>
</dbReference>
<dbReference type="SUPFAM" id="SSF47781">
    <property type="entry name" value="RuvA domain 2-like"/>
    <property type="match status" value="1"/>
</dbReference>
<dbReference type="PROSITE" id="PS50172">
    <property type="entry name" value="BRCT"/>
    <property type="match status" value="1"/>
</dbReference>
<dbReference type="PROSITE" id="PS01055">
    <property type="entry name" value="DNA_LIGASE_N1"/>
    <property type="match status" value="1"/>
</dbReference>
<dbReference type="PROSITE" id="PS01056">
    <property type="entry name" value="DNA_LIGASE_N2"/>
    <property type="match status" value="1"/>
</dbReference>
<keyword id="KW-0227">DNA damage</keyword>
<keyword id="KW-0234">DNA repair</keyword>
<keyword id="KW-0235">DNA replication</keyword>
<keyword id="KW-0436">Ligase</keyword>
<keyword id="KW-0460">Magnesium</keyword>
<keyword id="KW-0464">Manganese</keyword>
<keyword id="KW-0479">Metal-binding</keyword>
<keyword id="KW-0520">NAD</keyword>
<keyword id="KW-0862">Zinc</keyword>
<sequence length="676" mass="75547">MVQTHSEVKRVEELRRLLQQASYAYYVLDAPVMEDAVYDQLYRELQQLEIQHPELVTPDSPTQRIGERPATQFLSVRHNIPLYSLENAFNVEELQAWDQRWRRQVAPTEAEYVAELKIDGSAIALTYENGILVRGATRGDGVTGEDITQNVRTIRSIPLRLSFDGIENIGKVEVRGEAFLPLEVFKQINEERQKAGEQLFANPRNAAAGTLRQLDSKIVARRRLDFFAYTLHISGMDDASIANTQWEALELLQKMGFRVNSQHQLCQSLAEVADYYRYWDTERLNLPYMTDGVVLKLNSFKLQEQLGFTQRFPRWAVALKYPAEEAPTRVENIAVNVGRTGALTPLAQMRPVQLAGTTVSRATLHNSDRIAQLDIRIGDTVIVRKAGEIIPEVVRVLKELRPVDTQPFIMPTHCPVCGQPVVRETGEAVTRCVNASCAAILKGSIEHWVSRDALDIKGVGEKLVHQLVDKELVHSVADLYSLTNEQLFVLERMGEKSAQKLIEAIAQSKNQPWSRVLYGLGIRHVGSVNAQLLSEKYRAVAELSSAKQSDIAGIYGIGAEIAQSVYQWFRISANQRLIERLQAAGLQFANTEEISAVDNANLKLVGKTFVITGTLPTLKRDEAKALIQKAGGKITESVSKKTDYLVVGEDAGSKLEKAQTLGIKQLSEAELLKILA</sequence>
<organism>
    <name type="scientific">Trichormus variabilis (strain ATCC 29413 / PCC 7937)</name>
    <name type="common">Anabaena variabilis</name>
    <dbReference type="NCBI Taxonomy" id="240292"/>
    <lineage>
        <taxon>Bacteria</taxon>
        <taxon>Bacillati</taxon>
        <taxon>Cyanobacteriota</taxon>
        <taxon>Cyanophyceae</taxon>
        <taxon>Nostocales</taxon>
        <taxon>Nostocaceae</taxon>
        <taxon>Trichormus</taxon>
    </lineage>
</organism>
<reference key="1">
    <citation type="journal article" date="2014" name="Stand. Genomic Sci.">
        <title>Complete genome sequence of Anabaena variabilis ATCC 29413.</title>
        <authorList>
            <person name="Thiel T."/>
            <person name="Pratte B.S."/>
            <person name="Zhong J."/>
            <person name="Goodwin L."/>
            <person name="Copeland A."/>
            <person name="Lucas S."/>
            <person name="Han C."/>
            <person name="Pitluck S."/>
            <person name="Land M.L."/>
            <person name="Kyrpides N.C."/>
            <person name="Woyke T."/>
        </authorList>
    </citation>
    <scope>NUCLEOTIDE SEQUENCE [LARGE SCALE GENOMIC DNA]</scope>
    <source>
        <strain>ATCC 29413 / PCC 7937</strain>
    </source>
</reference>
<protein>
    <recommendedName>
        <fullName evidence="1">DNA ligase</fullName>
        <ecNumber evidence="1">6.5.1.2</ecNumber>
    </recommendedName>
    <alternativeName>
        <fullName evidence="1">Polydeoxyribonucleotide synthase [NAD(+)]</fullName>
    </alternativeName>
</protein>
<evidence type="ECO:0000255" key="1">
    <source>
        <dbReference type="HAMAP-Rule" id="MF_01588"/>
    </source>
</evidence>
<accession>Q3MGE7</accession>
<name>DNLJ_TRIV2</name>